<gene>
    <name evidence="1" type="primary">dnaJ2</name>
    <name type="ordered locus">aq_703</name>
</gene>
<protein>
    <recommendedName>
        <fullName evidence="1">Chaperone protein DnaJ 2</fullName>
    </recommendedName>
</protein>
<keyword id="KW-0143">Chaperone</keyword>
<keyword id="KW-0963">Cytoplasm</keyword>
<keyword id="KW-0235">DNA replication</keyword>
<keyword id="KW-0479">Metal-binding</keyword>
<keyword id="KW-1185">Reference proteome</keyword>
<keyword id="KW-0677">Repeat</keyword>
<keyword id="KW-0346">Stress response</keyword>
<keyword id="KW-0862">Zinc</keyword>
<keyword id="KW-0863">Zinc-finger</keyword>
<organism>
    <name type="scientific">Aquifex aeolicus (strain VF5)</name>
    <dbReference type="NCBI Taxonomy" id="224324"/>
    <lineage>
        <taxon>Bacteria</taxon>
        <taxon>Pseudomonadati</taxon>
        <taxon>Aquificota</taxon>
        <taxon>Aquificia</taxon>
        <taxon>Aquificales</taxon>
        <taxon>Aquificaceae</taxon>
        <taxon>Aquifex</taxon>
    </lineage>
</organism>
<accession>O66921</accession>
<comment type="function">
    <text evidence="1">Participates actively in the response to hyperosmotic and heat shock by preventing the aggregation of stress-denatured proteins and by disaggregating proteins, also in an autonomous, DnaK-independent fashion. Unfolded proteins bind initially to DnaJ; upon interaction with the DnaJ-bound protein, DnaK hydrolyzes its bound ATP, resulting in the formation of a stable complex. GrpE releases ADP from DnaK; ATP binding to DnaK triggers the release of the substrate protein, thus completing the reaction cycle. Several rounds of ATP-dependent interactions between DnaJ, DnaK and GrpE are required for fully efficient folding. Also involved, together with DnaK and GrpE, in the DNA replication of plasmids through activation of initiation proteins.</text>
</comment>
<comment type="cofactor">
    <cofactor evidence="1">
        <name>Zn(2+)</name>
        <dbReference type="ChEBI" id="CHEBI:29105"/>
    </cofactor>
    <text evidence="1">Binds 2 Zn(2+) ions per monomer.</text>
</comment>
<comment type="subunit">
    <text evidence="1">Homodimer.</text>
</comment>
<comment type="subcellular location">
    <subcellularLocation>
        <location evidence="1">Cytoplasm</location>
    </subcellularLocation>
</comment>
<comment type="domain">
    <text evidence="1">The J domain is necessary and sufficient to stimulate DnaK ATPase activity. Zinc center 1 plays an important role in the autonomous, DnaK-independent chaperone activity of DnaJ. Zinc center 2 is essential for interaction with DnaK and for DnaJ activity.</text>
</comment>
<comment type="similarity">
    <text evidence="1">Belongs to the DnaJ family.</text>
</comment>
<proteinExistence type="inferred from homology"/>
<evidence type="ECO:0000255" key="1">
    <source>
        <dbReference type="HAMAP-Rule" id="MF_01152"/>
    </source>
</evidence>
<dbReference type="EMBL" id="AE000657">
    <property type="protein sequence ID" value="AAC06881.1"/>
    <property type="molecule type" value="Genomic_DNA"/>
</dbReference>
<dbReference type="PIR" id="E70361">
    <property type="entry name" value="E70361"/>
</dbReference>
<dbReference type="RefSeq" id="NP_213481.1">
    <property type="nucleotide sequence ID" value="NC_000918.1"/>
</dbReference>
<dbReference type="RefSeq" id="WP_010880419.1">
    <property type="nucleotide sequence ID" value="NC_000918.1"/>
</dbReference>
<dbReference type="SMR" id="O66921"/>
<dbReference type="FunCoup" id="O66921">
    <property type="interactions" value="475"/>
</dbReference>
<dbReference type="STRING" id="224324.aq_703"/>
<dbReference type="EnsemblBacteria" id="AAC06881">
    <property type="protein sequence ID" value="AAC06881"/>
    <property type="gene ID" value="aq_703"/>
</dbReference>
<dbReference type="KEGG" id="aae:aq_703"/>
<dbReference type="PATRIC" id="fig|224324.8.peg.563"/>
<dbReference type="eggNOG" id="COG0484">
    <property type="taxonomic scope" value="Bacteria"/>
</dbReference>
<dbReference type="HOGENOM" id="CLU_017633_0_7_0"/>
<dbReference type="InParanoid" id="O66921"/>
<dbReference type="OrthoDB" id="9779889at2"/>
<dbReference type="Proteomes" id="UP000000798">
    <property type="component" value="Chromosome"/>
</dbReference>
<dbReference type="GO" id="GO:0005737">
    <property type="term" value="C:cytoplasm"/>
    <property type="evidence" value="ECO:0000318"/>
    <property type="project" value="GO_Central"/>
</dbReference>
<dbReference type="GO" id="GO:0005524">
    <property type="term" value="F:ATP binding"/>
    <property type="evidence" value="ECO:0007669"/>
    <property type="project" value="InterPro"/>
</dbReference>
<dbReference type="GO" id="GO:0031072">
    <property type="term" value="F:heat shock protein binding"/>
    <property type="evidence" value="ECO:0007669"/>
    <property type="project" value="InterPro"/>
</dbReference>
<dbReference type="GO" id="GO:0051082">
    <property type="term" value="F:unfolded protein binding"/>
    <property type="evidence" value="ECO:0000318"/>
    <property type="project" value="GO_Central"/>
</dbReference>
<dbReference type="GO" id="GO:0008270">
    <property type="term" value="F:zinc ion binding"/>
    <property type="evidence" value="ECO:0007669"/>
    <property type="project" value="UniProtKB-UniRule"/>
</dbReference>
<dbReference type="GO" id="GO:0051085">
    <property type="term" value="P:chaperone cofactor-dependent protein refolding"/>
    <property type="evidence" value="ECO:0000318"/>
    <property type="project" value="GO_Central"/>
</dbReference>
<dbReference type="GO" id="GO:0006260">
    <property type="term" value="P:DNA replication"/>
    <property type="evidence" value="ECO:0007669"/>
    <property type="project" value="UniProtKB-KW"/>
</dbReference>
<dbReference type="GO" id="GO:0042026">
    <property type="term" value="P:protein refolding"/>
    <property type="evidence" value="ECO:0000318"/>
    <property type="project" value="GO_Central"/>
</dbReference>
<dbReference type="GO" id="GO:0009408">
    <property type="term" value="P:response to heat"/>
    <property type="evidence" value="ECO:0007669"/>
    <property type="project" value="InterPro"/>
</dbReference>
<dbReference type="CDD" id="cd06257">
    <property type="entry name" value="DnaJ"/>
    <property type="match status" value="1"/>
</dbReference>
<dbReference type="CDD" id="cd10747">
    <property type="entry name" value="DnaJ_C"/>
    <property type="match status" value="1"/>
</dbReference>
<dbReference type="FunFam" id="1.10.287.110:FF:000034">
    <property type="entry name" value="Chaperone protein DnaJ"/>
    <property type="match status" value="1"/>
</dbReference>
<dbReference type="FunFam" id="2.60.260.20:FF:000005">
    <property type="entry name" value="Chaperone protein dnaJ 1, mitochondrial"/>
    <property type="match status" value="1"/>
</dbReference>
<dbReference type="FunFam" id="2.10.230.10:FF:000001">
    <property type="entry name" value="DnaJ subfamily A member 2"/>
    <property type="match status" value="1"/>
</dbReference>
<dbReference type="Gene3D" id="1.10.287.110">
    <property type="entry name" value="DnaJ domain"/>
    <property type="match status" value="1"/>
</dbReference>
<dbReference type="Gene3D" id="2.10.230.10">
    <property type="entry name" value="Heat shock protein DnaJ, cysteine-rich domain"/>
    <property type="match status" value="1"/>
</dbReference>
<dbReference type="Gene3D" id="2.60.260.20">
    <property type="entry name" value="Urease metallochaperone UreE, N-terminal domain"/>
    <property type="match status" value="2"/>
</dbReference>
<dbReference type="HAMAP" id="MF_01152">
    <property type="entry name" value="DnaJ"/>
    <property type="match status" value="1"/>
</dbReference>
<dbReference type="InterPro" id="IPR012724">
    <property type="entry name" value="DnaJ"/>
</dbReference>
<dbReference type="InterPro" id="IPR002939">
    <property type="entry name" value="DnaJ_C"/>
</dbReference>
<dbReference type="InterPro" id="IPR001623">
    <property type="entry name" value="DnaJ_domain"/>
</dbReference>
<dbReference type="InterPro" id="IPR018253">
    <property type="entry name" value="DnaJ_domain_CS"/>
</dbReference>
<dbReference type="InterPro" id="IPR008971">
    <property type="entry name" value="HSP40/DnaJ_pept-bd"/>
</dbReference>
<dbReference type="InterPro" id="IPR001305">
    <property type="entry name" value="HSP_DnaJ_Cys-rich_dom"/>
</dbReference>
<dbReference type="InterPro" id="IPR036410">
    <property type="entry name" value="HSP_DnaJ_Cys-rich_dom_sf"/>
</dbReference>
<dbReference type="InterPro" id="IPR036869">
    <property type="entry name" value="J_dom_sf"/>
</dbReference>
<dbReference type="NCBIfam" id="TIGR02349">
    <property type="entry name" value="DnaJ_bact"/>
    <property type="match status" value="1"/>
</dbReference>
<dbReference type="NCBIfam" id="NF008035">
    <property type="entry name" value="PRK10767.1"/>
    <property type="match status" value="1"/>
</dbReference>
<dbReference type="NCBIfam" id="NF010884">
    <property type="entry name" value="PRK14291.1"/>
    <property type="match status" value="1"/>
</dbReference>
<dbReference type="PANTHER" id="PTHR43096">
    <property type="entry name" value="DNAJ HOMOLOG 1, MITOCHONDRIAL-RELATED"/>
    <property type="match status" value="1"/>
</dbReference>
<dbReference type="PANTHER" id="PTHR43096:SF52">
    <property type="entry name" value="DNAJ HOMOLOG 1, MITOCHONDRIAL-RELATED"/>
    <property type="match status" value="1"/>
</dbReference>
<dbReference type="Pfam" id="PF00226">
    <property type="entry name" value="DnaJ"/>
    <property type="match status" value="1"/>
</dbReference>
<dbReference type="Pfam" id="PF01556">
    <property type="entry name" value="DnaJ_C"/>
    <property type="match status" value="1"/>
</dbReference>
<dbReference type="Pfam" id="PF00684">
    <property type="entry name" value="DnaJ_CXXCXGXG"/>
    <property type="match status" value="1"/>
</dbReference>
<dbReference type="PRINTS" id="PR00625">
    <property type="entry name" value="JDOMAIN"/>
</dbReference>
<dbReference type="SMART" id="SM00271">
    <property type="entry name" value="DnaJ"/>
    <property type="match status" value="1"/>
</dbReference>
<dbReference type="SUPFAM" id="SSF46565">
    <property type="entry name" value="Chaperone J-domain"/>
    <property type="match status" value="1"/>
</dbReference>
<dbReference type="SUPFAM" id="SSF57938">
    <property type="entry name" value="DnaJ/Hsp40 cysteine-rich domain"/>
    <property type="match status" value="1"/>
</dbReference>
<dbReference type="SUPFAM" id="SSF49493">
    <property type="entry name" value="HSP40/DnaJ peptide-binding domain"/>
    <property type="match status" value="2"/>
</dbReference>
<dbReference type="PROSITE" id="PS00636">
    <property type="entry name" value="DNAJ_1"/>
    <property type="match status" value="1"/>
</dbReference>
<dbReference type="PROSITE" id="PS50076">
    <property type="entry name" value="DNAJ_2"/>
    <property type="match status" value="1"/>
</dbReference>
<dbReference type="PROSITE" id="PS51188">
    <property type="entry name" value="ZF_CR"/>
    <property type="match status" value="1"/>
</dbReference>
<name>DNAJ2_AQUAE</name>
<sequence>MASSTKKDYYEILGVPRNASQEEIKKAYRRLVRKYHPDICKKPECEEKFKEINEAYQVLSDPEKRKLYDMYGHAAFEGAGAQQRVETTEIPPIEEILREFFDFDIGSIFERATGRRRARRRRSVKGEDIVVPVEITLEEAFKGTTVPIEVEREVPCSACGGTGYDESKSRTCPTCGGRGETVQGNWFFQVRQTCPTCGGEGVIYENCHACTGRGYGLVKETIKVKIPPGVRDGSKLVVEGKGHAGRYGGPPGDLYIIVKVKPHKIFERKGDDLYVDVNITYPEAVLGTEVEVPTLDGEKVKVKIPPGTKEGELIKVPGKGMPRLKGSGRGDLYVRVHIDVPKIGVLSKLLGDGKKVEELLKQLQEVLPKPERIVER</sequence>
<reference key="1">
    <citation type="journal article" date="1998" name="Nature">
        <title>The complete genome of the hyperthermophilic bacterium Aquifex aeolicus.</title>
        <authorList>
            <person name="Deckert G."/>
            <person name="Warren P.V."/>
            <person name="Gaasterland T."/>
            <person name="Young W.G."/>
            <person name="Lenox A.L."/>
            <person name="Graham D.E."/>
            <person name="Overbeek R."/>
            <person name="Snead M.A."/>
            <person name="Keller M."/>
            <person name="Aujay M."/>
            <person name="Huber R."/>
            <person name="Feldman R.A."/>
            <person name="Short J.M."/>
            <person name="Olsen G.J."/>
            <person name="Swanson R.V."/>
        </authorList>
    </citation>
    <scope>NUCLEOTIDE SEQUENCE [LARGE SCALE GENOMIC DNA]</scope>
    <source>
        <strain>VF5</strain>
    </source>
</reference>
<feature type="chain" id="PRO_0000070712" description="Chaperone protein DnaJ 2">
    <location>
        <begin position="1"/>
        <end position="376"/>
    </location>
</feature>
<feature type="domain" description="J" evidence="1">
    <location>
        <begin position="8"/>
        <end position="72"/>
    </location>
</feature>
<feature type="repeat" description="CXXCXGXG motif">
    <location>
        <begin position="156"/>
        <end position="163"/>
    </location>
</feature>
<feature type="repeat" description="CXXCXGXG motif">
    <location>
        <begin position="172"/>
        <end position="179"/>
    </location>
</feature>
<feature type="repeat" description="CXXCXGXG motif">
    <location>
        <begin position="194"/>
        <end position="201"/>
    </location>
</feature>
<feature type="repeat" description="CXXCXGXG motif">
    <location>
        <begin position="207"/>
        <end position="214"/>
    </location>
</feature>
<feature type="zinc finger region" description="CR-type" evidence="1">
    <location>
        <begin position="143"/>
        <end position="219"/>
    </location>
</feature>
<feature type="binding site" evidence="1">
    <location>
        <position position="156"/>
    </location>
    <ligand>
        <name>Zn(2+)</name>
        <dbReference type="ChEBI" id="CHEBI:29105"/>
        <label>1</label>
    </ligand>
</feature>
<feature type="binding site" evidence="1">
    <location>
        <position position="159"/>
    </location>
    <ligand>
        <name>Zn(2+)</name>
        <dbReference type="ChEBI" id="CHEBI:29105"/>
        <label>1</label>
    </ligand>
</feature>
<feature type="binding site" evidence="1">
    <location>
        <position position="172"/>
    </location>
    <ligand>
        <name>Zn(2+)</name>
        <dbReference type="ChEBI" id="CHEBI:29105"/>
        <label>2</label>
    </ligand>
</feature>
<feature type="binding site" evidence="1">
    <location>
        <position position="175"/>
    </location>
    <ligand>
        <name>Zn(2+)</name>
        <dbReference type="ChEBI" id="CHEBI:29105"/>
        <label>2</label>
    </ligand>
</feature>
<feature type="binding site" evidence="1">
    <location>
        <position position="194"/>
    </location>
    <ligand>
        <name>Zn(2+)</name>
        <dbReference type="ChEBI" id="CHEBI:29105"/>
        <label>2</label>
    </ligand>
</feature>
<feature type="binding site" evidence="1">
    <location>
        <position position="197"/>
    </location>
    <ligand>
        <name>Zn(2+)</name>
        <dbReference type="ChEBI" id="CHEBI:29105"/>
        <label>2</label>
    </ligand>
</feature>
<feature type="binding site" evidence="1">
    <location>
        <position position="207"/>
    </location>
    <ligand>
        <name>Zn(2+)</name>
        <dbReference type="ChEBI" id="CHEBI:29105"/>
        <label>1</label>
    </ligand>
</feature>
<feature type="binding site" evidence="1">
    <location>
        <position position="210"/>
    </location>
    <ligand>
        <name>Zn(2+)</name>
        <dbReference type="ChEBI" id="CHEBI:29105"/>
        <label>1</label>
    </ligand>
</feature>